<accession>Q58283</accession>
<proteinExistence type="inferred from homology"/>
<organism>
    <name type="scientific">Methanocaldococcus jannaschii (strain ATCC 43067 / DSM 2661 / JAL-1 / JCM 10045 / NBRC 100440)</name>
    <name type="common">Methanococcus jannaschii</name>
    <dbReference type="NCBI Taxonomy" id="243232"/>
    <lineage>
        <taxon>Archaea</taxon>
        <taxon>Methanobacteriati</taxon>
        <taxon>Methanobacteriota</taxon>
        <taxon>Methanomada group</taxon>
        <taxon>Methanococci</taxon>
        <taxon>Methanococcales</taxon>
        <taxon>Methanocaldococcaceae</taxon>
        <taxon>Methanocaldococcus</taxon>
    </lineage>
</organism>
<keyword id="KW-0067">ATP-binding</keyword>
<keyword id="KW-0547">Nucleotide-binding</keyword>
<keyword id="KW-1185">Reference proteome</keyword>
<keyword id="KW-0813">Transport</keyword>
<reference key="1">
    <citation type="journal article" date="1996" name="Science">
        <title>Complete genome sequence of the methanogenic archaeon, Methanococcus jannaschii.</title>
        <authorList>
            <person name="Bult C.J."/>
            <person name="White O."/>
            <person name="Olsen G.J."/>
            <person name="Zhou L."/>
            <person name="Fleischmann R.D."/>
            <person name="Sutton G.G."/>
            <person name="Blake J.A."/>
            <person name="FitzGerald L.M."/>
            <person name="Clayton R.A."/>
            <person name="Gocayne J.D."/>
            <person name="Kerlavage A.R."/>
            <person name="Dougherty B.A."/>
            <person name="Tomb J.-F."/>
            <person name="Adams M.D."/>
            <person name="Reich C.I."/>
            <person name="Overbeek R."/>
            <person name="Kirkness E.F."/>
            <person name="Weinstock K.G."/>
            <person name="Merrick J.M."/>
            <person name="Glodek A."/>
            <person name="Scott J.L."/>
            <person name="Geoghagen N.S.M."/>
            <person name="Weidman J.F."/>
            <person name="Fuhrmann J.L."/>
            <person name="Nguyen D."/>
            <person name="Utterback T.R."/>
            <person name="Kelley J.M."/>
            <person name="Peterson J.D."/>
            <person name="Sadow P.W."/>
            <person name="Hanna M.C."/>
            <person name="Cotton M.D."/>
            <person name="Roberts K.M."/>
            <person name="Hurst M.A."/>
            <person name="Kaine B.P."/>
            <person name="Borodovsky M."/>
            <person name="Klenk H.-P."/>
            <person name="Fraser C.M."/>
            <person name="Smith H.O."/>
            <person name="Woese C.R."/>
            <person name="Venter J.C."/>
        </authorList>
    </citation>
    <scope>NUCLEOTIDE SEQUENCE [LARGE SCALE GENOMIC DNA]</scope>
    <source>
        <strain>ATCC 43067 / DSM 2661 / JAL-1 / JCM 10045 / NBRC 100440</strain>
    </source>
</reference>
<sequence>MLKTENLSVGYGNYVVVEGINLEINRGEILCIIGPNGAGKSTLLKTIATYLKPKKGVVYLNGKKIHDLKPKDLAKEMAVVLTERVNPGNMTGFDVVAIGRHPYTDLFGRLTERDKKIIIESARAVNAEYLLEKNFFEMSDGERQKIMIARALAQEPKVLILDEPTSFLDAKHKIELTLLLRKLADEKNLAIVVTLHDIELALRIADKMALIKNHKVIAYGYPENVMKREIVNELYDLKNANYSEVIGYFELKNNPIKNKKIFVICGGGTGANVLRYLVKNRYDVVVGHLA</sequence>
<protein>
    <recommendedName>
        <fullName>Uncharacterized ABC transporter ATP-binding protein MJ0873</fullName>
    </recommendedName>
</protein>
<dbReference type="EMBL" id="L77117">
    <property type="protein sequence ID" value="AAB98878.1"/>
    <property type="molecule type" value="Genomic_DNA"/>
</dbReference>
<dbReference type="PIR" id="A64409">
    <property type="entry name" value="A64409"/>
</dbReference>
<dbReference type="SMR" id="Q58283"/>
<dbReference type="FunCoup" id="Q58283">
    <property type="interactions" value="26"/>
</dbReference>
<dbReference type="STRING" id="243232.MJ_0873"/>
<dbReference type="PaxDb" id="243232-MJ_0873"/>
<dbReference type="EnsemblBacteria" id="AAB98878">
    <property type="protein sequence ID" value="AAB98878"/>
    <property type="gene ID" value="MJ_0873"/>
</dbReference>
<dbReference type="KEGG" id="mja:MJ_0873"/>
<dbReference type="eggNOG" id="arCOG00198">
    <property type="taxonomic scope" value="Archaea"/>
</dbReference>
<dbReference type="HOGENOM" id="CLU_000604_1_11_2"/>
<dbReference type="InParanoid" id="Q58283"/>
<dbReference type="PhylomeDB" id="Q58283"/>
<dbReference type="Proteomes" id="UP000000805">
    <property type="component" value="Chromosome"/>
</dbReference>
<dbReference type="GO" id="GO:0043190">
    <property type="term" value="C:ATP-binding cassette (ABC) transporter complex"/>
    <property type="evidence" value="ECO:0000318"/>
    <property type="project" value="GO_Central"/>
</dbReference>
<dbReference type="GO" id="GO:0005524">
    <property type="term" value="F:ATP binding"/>
    <property type="evidence" value="ECO:0007669"/>
    <property type="project" value="UniProtKB-KW"/>
</dbReference>
<dbReference type="GO" id="GO:0016887">
    <property type="term" value="F:ATP hydrolysis activity"/>
    <property type="evidence" value="ECO:0007669"/>
    <property type="project" value="InterPro"/>
</dbReference>
<dbReference type="GO" id="GO:0042626">
    <property type="term" value="F:ATPase-coupled transmembrane transporter activity"/>
    <property type="evidence" value="ECO:0000318"/>
    <property type="project" value="GO_Central"/>
</dbReference>
<dbReference type="CDD" id="cd03214">
    <property type="entry name" value="ABC_Iron-Siderophores_B12_Hemin"/>
    <property type="match status" value="1"/>
</dbReference>
<dbReference type="FunFam" id="3.40.50.300:FF:004343">
    <property type="entry name" value="ABC transporter releated protein"/>
    <property type="match status" value="1"/>
</dbReference>
<dbReference type="Gene3D" id="3.40.50.300">
    <property type="entry name" value="P-loop containing nucleotide triphosphate hydrolases"/>
    <property type="match status" value="1"/>
</dbReference>
<dbReference type="InterPro" id="IPR003593">
    <property type="entry name" value="AAA+_ATPase"/>
</dbReference>
<dbReference type="InterPro" id="IPR003439">
    <property type="entry name" value="ABC_transporter-like_ATP-bd"/>
</dbReference>
<dbReference type="InterPro" id="IPR050153">
    <property type="entry name" value="Metal_Ion_Import_ABC"/>
</dbReference>
<dbReference type="InterPro" id="IPR027417">
    <property type="entry name" value="P-loop_NTPase"/>
</dbReference>
<dbReference type="PANTHER" id="PTHR42734:SF21">
    <property type="entry name" value="IRON ABC TRANSPORTER, ATP-BINDING PROTEIN"/>
    <property type="match status" value="1"/>
</dbReference>
<dbReference type="PANTHER" id="PTHR42734">
    <property type="entry name" value="METAL TRANSPORT SYSTEM ATP-BINDING PROTEIN TM_0124-RELATED"/>
    <property type="match status" value="1"/>
</dbReference>
<dbReference type="Pfam" id="PF00005">
    <property type="entry name" value="ABC_tran"/>
    <property type="match status" value="1"/>
</dbReference>
<dbReference type="SMART" id="SM00382">
    <property type="entry name" value="AAA"/>
    <property type="match status" value="1"/>
</dbReference>
<dbReference type="SUPFAM" id="SSF52540">
    <property type="entry name" value="P-loop containing nucleoside triphosphate hydrolases"/>
    <property type="match status" value="1"/>
</dbReference>
<dbReference type="PROSITE" id="PS50893">
    <property type="entry name" value="ABC_TRANSPORTER_2"/>
    <property type="match status" value="1"/>
</dbReference>
<gene>
    <name type="ordered locus">MJ0873</name>
</gene>
<feature type="chain" id="PRO_0000093222" description="Uncharacterized ABC transporter ATP-binding protein MJ0873">
    <location>
        <begin position="1"/>
        <end position="290"/>
    </location>
</feature>
<feature type="domain" description="ABC transporter" evidence="1">
    <location>
        <begin position="2"/>
        <end position="238"/>
    </location>
</feature>
<feature type="binding site" evidence="1">
    <location>
        <begin position="34"/>
        <end position="41"/>
    </location>
    <ligand>
        <name>ATP</name>
        <dbReference type="ChEBI" id="CHEBI:30616"/>
    </ligand>
</feature>
<evidence type="ECO:0000255" key="1">
    <source>
        <dbReference type="PROSITE-ProRule" id="PRU00434"/>
    </source>
</evidence>
<evidence type="ECO:0000305" key="2"/>
<comment type="similarity">
    <text evidence="2">Belongs to the ABC transporter superfamily.</text>
</comment>
<name>Y873_METJA</name>